<evidence type="ECO:0000255" key="1">
    <source>
        <dbReference type="HAMAP-Rule" id="MF_00563"/>
    </source>
</evidence>
<comment type="function">
    <text evidence="1">May play a key role in the regulation of the intracellular concentration of adenosylhomocysteine.</text>
</comment>
<comment type="catalytic activity">
    <reaction evidence="1">
        <text>S-adenosyl-L-homocysteine + H2O = L-homocysteine + adenosine</text>
        <dbReference type="Rhea" id="RHEA:21708"/>
        <dbReference type="ChEBI" id="CHEBI:15377"/>
        <dbReference type="ChEBI" id="CHEBI:16335"/>
        <dbReference type="ChEBI" id="CHEBI:57856"/>
        <dbReference type="ChEBI" id="CHEBI:58199"/>
        <dbReference type="EC" id="3.13.2.1"/>
    </reaction>
</comment>
<comment type="cofactor">
    <cofactor evidence="1">
        <name>NAD(+)</name>
        <dbReference type="ChEBI" id="CHEBI:57540"/>
    </cofactor>
    <text evidence="1">Binds 1 NAD(+) per subunit.</text>
</comment>
<comment type="pathway">
    <text evidence="1">Amino-acid biosynthesis; L-homocysteine biosynthesis; L-homocysteine from S-adenosyl-L-homocysteine: step 1/1.</text>
</comment>
<comment type="subcellular location">
    <subcellularLocation>
        <location evidence="1">Cytoplasm</location>
    </subcellularLocation>
</comment>
<comment type="similarity">
    <text evidence="1">Belongs to the adenosylhomocysteinase family.</text>
</comment>
<name>SAHH_CHLTE</name>
<gene>
    <name evidence="1" type="primary">ahcY</name>
    <name type="synonym">sahH</name>
    <name type="ordered locus">CT0721</name>
</gene>
<dbReference type="EC" id="3.13.2.1" evidence="1"/>
<dbReference type="EMBL" id="AE006470">
    <property type="protein sequence ID" value="AAM71958.1"/>
    <property type="molecule type" value="Genomic_DNA"/>
</dbReference>
<dbReference type="RefSeq" id="NP_661616.1">
    <property type="nucleotide sequence ID" value="NC_002932.3"/>
</dbReference>
<dbReference type="RefSeq" id="WP_010932403.1">
    <property type="nucleotide sequence ID" value="NC_002932.3"/>
</dbReference>
<dbReference type="SMR" id="Q8KEG8"/>
<dbReference type="STRING" id="194439.CT0721"/>
<dbReference type="EnsemblBacteria" id="AAM71958">
    <property type="protein sequence ID" value="AAM71958"/>
    <property type="gene ID" value="CT0721"/>
</dbReference>
<dbReference type="KEGG" id="cte:CT0721"/>
<dbReference type="PATRIC" id="fig|194439.7.peg.661"/>
<dbReference type="eggNOG" id="COG0499">
    <property type="taxonomic scope" value="Bacteria"/>
</dbReference>
<dbReference type="HOGENOM" id="CLU_025194_2_1_10"/>
<dbReference type="OrthoDB" id="9802717at2"/>
<dbReference type="UniPathway" id="UPA00314">
    <property type="reaction ID" value="UER00076"/>
</dbReference>
<dbReference type="Proteomes" id="UP000001007">
    <property type="component" value="Chromosome"/>
</dbReference>
<dbReference type="GO" id="GO:0005829">
    <property type="term" value="C:cytosol"/>
    <property type="evidence" value="ECO:0007669"/>
    <property type="project" value="TreeGrafter"/>
</dbReference>
<dbReference type="GO" id="GO:0004013">
    <property type="term" value="F:adenosylhomocysteinase activity"/>
    <property type="evidence" value="ECO:0007669"/>
    <property type="project" value="UniProtKB-UniRule"/>
</dbReference>
<dbReference type="GO" id="GO:0071269">
    <property type="term" value="P:L-homocysteine biosynthetic process"/>
    <property type="evidence" value="ECO:0007669"/>
    <property type="project" value="UniProtKB-UniRule"/>
</dbReference>
<dbReference type="GO" id="GO:0006730">
    <property type="term" value="P:one-carbon metabolic process"/>
    <property type="evidence" value="ECO:0007669"/>
    <property type="project" value="UniProtKB-KW"/>
</dbReference>
<dbReference type="GO" id="GO:0033353">
    <property type="term" value="P:S-adenosylmethionine cycle"/>
    <property type="evidence" value="ECO:0007669"/>
    <property type="project" value="TreeGrafter"/>
</dbReference>
<dbReference type="CDD" id="cd00401">
    <property type="entry name" value="SAHH"/>
    <property type="match status" value="1"/>
</dbReference>
<dbReference type="FunFam" id="3.40.50.720:FF:000004">
    <property type="entry name" value="Adenosylhomocysteinase"/>
    <property type="match status" value="1"/>
</dbReference>
<dbReference type="Gene3D" id="3.40.50.1480">
    <property type="entry name" value="Adenosylhomocysteinase-like"/>
    <property type="match status" value="1"/>
</dbReference>
<dbReference type="Gene3D" id="3.40.50.720">
    <property type="entry name" value="NAD(P)-binding Rossmann-like Domain"/>
    <property type="match status" value="1"/>
</dbReference>
<dbReference type="HAMAP" id="MF_00563">
    <property type="entry name" value="AdoHcyase"/>
    <property type="match status" value="1"/>
</dbReference>
<dbReference type="InterPro" id="IPR042172">
    <property type="entry name" value="Adenosylhomocyst_ase-like_sf"/>
</dbReference>
<dbReference type="InterPro" id="IPR000043">
    <property type="entry name" value="Adenosylhomocysteinase-like"/>
</dbReference>
<dbReference type="InterPro" id="IPR015878">
    <property type="entry name" value="Ado_hCys_hydrolase_NAD-bd"/>
</dbReference>
<dbReference type="InterPro" id="IPR036291">
    <property type="entry name" value="NAD(P)-bd_dom_sf"/>
</dbReference>
<dbReference type="InterPro" id="IPR020082">
    <property type="entry name" value="S-Ado-L-homoCys_hydrolase_CS"/>
</dbReference>
<dbReference type="NCBIfam" id="TIGR00936">
    <property type="entry name" value="ahcY"/>
    <property type="match status" value="1"/>
</dbReference>
<dbReference type="NCBIfam" id="NF004005">
    <property type="entry name" value="PRK05476.2-3"/>
    <property type="match status" value="1"/>
</dbReference>
<dbReference type="PANTHER" id="PTHR23420">
    <property type="entry name" value="ADENOSYLHOMOCYSTEINASE"/>
    <property type="match status" value="1"/>
</dbReference>
<dbReference type="PANTHER" id="PTHR23420:SF0">
    <property type="entry name" value="ADENOSYLHOMOCYSTEINASE"/>
    <property type="match status" value="1"/>
</dbReference>
<dbReference type="Pfam" id="PF05221">
    <property type="entry name" value="AdoHcyase"/>
    <property type="match status" value="1"/>
</dbReference>
<dbReference type="Pfam" id="PF00670">
    <property type="entry name" value="AdoHcyase_NAD"/>
    <property type="match status" value="1"/>
</dbReference>
<dbReference type="PIRSF" id="PIRSF001109">
    <property type="entry name" value="Ad_hcy_hydrolase"/>
    <property type="match status" value="1"/>
</dbReference>
<dbReference type="SMART" id="SM00996">
    <property type="entry name" value="AdoHcyase"/>
    <property type="match status" value="1"/>
</dbReference>
<dbReference type="SMART" id="SM00997">
    <property type="entry name" value="AdoHcyase_NAD"/>
    <property type="match status" value="1"/>
</dbReference>
<dbReference type="SUPFAM" id="SSF52283">
    <property type="entry name" value="Formate/glycerate dehydrogenase catalytic domain-like"/>
    <property type="match status" value="1"/>
</dbReference>
<dbReference type="SUPFAM" id="SSF51735">
    <property type="entry name" value="NAD(P)-binding Rossmann-fold domains"/>
    <property type="match status" value="1"/>
</dbReference>
<dbReference type="PROSITE" id="PS00738">
    <property type="entry name" value="ADOHCYASE_1"/>
    <property type="match status" value="1"/>
</dbReference>
<dbReference type="PROSITE" id="PS00739">
    <property type="entry name" value="ADOHCYASE_2"/>
    <property type="match status" value="1"/>
</dbReference>
<proteinExistence type="inferred from homology"/>
<reference key="1">
    <citation type="journal article" date="2002" name="Proc. Natl. Acad. Sci. U.S.A.">
        <title>The complete genome sequence of Chlorobium tepidum TLS, a photosynthetic, anaerobic, green-sulfur bacterium.</title>
        <authorList>
            <person name="Eisen J.A."/>
            <person name="Nelson K.E."/>
            <person name="Paulsen I.T."/>
            <person name="Heidelberg J.F."/>
            <person name="Wu M."/>
            <person name="Dodson R.J."/>
            <person name="DeBoy R.T."/>
            <person name="Gwinn M.L."/>
            <person name="Nelson W.C."/>
            <person name="Haft D.H."/>
            <person name="Hickey E.K."/>
            <person name="Peterson J.D."/>
            <person name="Durkin A.S."/>
            <person name="Kolonay J.F."/>
            <person name="Yang F."/>
            <person name="Holt I.E."/>
            <person name="Umayam L.A."/>
            <person name="Mason T.M."/>
            <person name="Brenner M."/>
            <person name="Shea T.P."/>
            <person name="Parksey D.S."/>
            <person name="Nierman W.C."/>
            <person name="Feldblyum T.V."/>
            <person name="Hansen C.L."/>
            <person name="Craven M.B."/>
            <person name="Radune D."/>
            <person name="Vamathevan J.J."/>
            <person name="Khouri H.M."/>
            <person name="White O."/>
            <person name="Gruber T.M."/>
            <person name="Ketchum K.A."/>
            <person name="Venter J.C."/>
            <person name="Tettelin H."/>
            <person name="Bryant D.A."/>
            <person name="Fraser C.M."/>
        </authorList>
    </citation>
    <scope>NUCLEOTIDE SEQUENCE [LARGE SCALE GENOMIC DNA]</scope>
    <source>
        <strain>ATCC 49652 / DSM 12025 / NBRC 103806 / TLS</strain>
    </source>
</reference>
<keyword id="KW-0963">Cytoplasm</keyword>
<keyword id="KW-0378">Hydrolase</keyword>
<keyword id="KW-0520">NAD</keyword>
<keyword id="KW-0554">One-carbon metabolism</keyword>
<keyword id="KW-1185">Reference proteome</keyword>
<organism>
    <name type="scientific">Chlorobaculum tepidum (strain ATCC 49652 / DSM 12025 / NBRC 103806 / TLS)</name>
    <name type="common">Chlorobium tepidum</name>
    <dbReference type="NCBI Taxonomy" id="194439"/>
    <lineage>
        <taxon>Bacteria</taxon>
        <taxon>Pseudomonadati</taxon>
        <taxon>Chlorobiota</taxon>
        <taxon>Chlorobiia</taxon>
        <taxon>Chlorobiales</taxon>
        <taxon>Chlorobiaceae</taxon>
        <taxon>Chlorobaculum</taxon>
    </lineage>
</organism>
<protein>
    <recommendedName>
        <fullName evidence="1">Adenosylhomocysteinase</fullName>
        <ecNumber evidence="1">3.13.2.1</ecNumber>
    </recommendedName>
    <alternativeName>
        <fullName evidence="1">S-adenosyl-L-homocysteine hydrolase</fullName>
        <shortName evidence="1">AdoHcyase</shortName>
    </alternativeName>
</protein>
<feature type="chain" id="PRO_0000116956" description="Adenosylhomocysteinase">
    <location>
        <begin position="1"/>
        <end position="471"/>
    </location>
</feature>
<feature type="binding site" evidence="1">
    <location>
        <position position="60"/>
    </location>
    <ligand>
        <name>substrate</name>
    </ligand>
</feature>
<feature type="binding site" evidence="1">
    <location>
        <position position="135"/>
    </location>
    <ligand>
        <name>substrate</name>
    </ligand>
</feature>
<feature type="binding site" evidence="1">
    <location>
        <position position="196"/>
    </location>
    <ligand>
        <name>substrate</name>
    </ligand>
</feature>
<feature type="binding site" evidence="1">
    <location>
        <begin position="197"/>
        <end position="199"/>
    </location>
    <ligand>
        <name>NAD(+)</name>
        <dbReference type="ChEBI" id="CHEBI:57540"/>
    </ligand>
</feature>
<feature type="binding site" evidence="1">
    <location>
        <position position="226"/>
    </location>
    <ligand>
        <name>substrate</name>
    </ligand>
</feature>
<feature type="binding site" evidence="1">
    <location>
        <position position="230"/>
    </location>
    <ligand>
        <name>substrate</name>
    </ligand>
</feature>
<feature type="binding site" evidence="1">
    <location>
        <position position="231"/>
    </location>
    <ligand>
        <name>NAD(+)</name>
        <dbReference type="ChEBI" id="CHEBI:57540"/>
    </ligand>
</feature>
<feature type="binding site" evidence="1">
    <location>
        <begin position="260"/>
        <end position="265"/>
    </location>
    <ligand>
        <name>NAD(+)</name>
        <dbReference type="ChEBI" id="CHEBI:57540"/>
    </ligand>
</feature>
<feature type="binding site" evidence="1">
    <location>
        <position position="283"/>
    </location>
    <ligand>
        <name>NAD(+)</name>
        <dbReference type="ChEBI" id="CHEBI:57540"/>
    </ligand>
</feature>
<feature type="binding site" evidence="1">
    <location>
        <position position="318"/>
    </location>
    <ligand>
        <name>NAD(+)</name>
        <dbReference type="ChEBI" id="CHEBI:57540"/>
    </ligand>
</feature>
<feature type="binding site" evidence="1">
    <location>
        <begin position="339"/>
        <end position="341"/>
    </location>
    <ligand>
        <name>NAD(+)</name>
        <dbReference type="ChEBI" id="CHEBI:57540"/>
    </ligand>
</feature>
<feature type="binding site" evidence="1">
    <location>
        <position position="387"/>
    </location>
    <ligand>
        <name>NAD(+)</name>
        <dbReference type="ChEBI" id="CHEBI:57540"/>
    </ligand>
</feature>
<sequence>MTTEAAVLDYKVADISLAEWGRKEIEIAEKEMPGLMATRKKYEGKKPLAGARIAGSLHMTIQTAVLIETLVELGADVRWASCNIFSTQDHAAAAIAAAGVPVFAWKGETLDEYWWCTRQILEFEGGLGPNLIVDDGGDATLMIHFGYKIENDPSMLDKTPGNAEEKALLQQLKAVFAEDNQRWHKVAAGMKGVSEETTTGVHRLYQMMEKGELLFPAINVNDSVTKSKFDNLYGCRESLADGIKRATDVMIAGKVVVVLGYGDVGKGCAHSMRSYGARVIVTEIDPICALQAAMEGFEVTTMEEAVKEGNIFVTATGNKDVITLDHIKQMRDEAIVCNIGHFDNEIQVDALNNFKGATRINIKPQVDKYVFENGNCIYLLAEGRLVNLGCATGHPSFVMSNSFTNQTLAQIELWQNDYKVGVYRLPKKLDEEVARLHLGQIGAKLTTLTKEQADYIGVPVEGPYKPEHYRY</sequence>
<accession>Q8KEG8</accession>